<name>ISPD_XANOP</name>
<evidence type="ECO:0000255" key="1">
    <source>
        <dbReference type="HAMAP-Rule" id="MF_00108"/>
    </source>
</evidence>
<feature type="chain" id="PRO_1000094360" description="2-C-methyl-D-erythritol 4-phosphate cytidylyltransferase">
    <location>
        <begin position="1"/>
        <end position="272"/>
    </location>
</feature>
<feature type="site" description="Transition state stabilizer" evidence="1">
    <location>
        <position position="22"/>
    </location>
</feature>
<feature type="site" description="Transition state stabilizer" evidence="1">
    <location>
        <position position="29"/>
    </location>
</feature>
<feature type="site" description="Positions MEP for the nucleophilic attack" evidence="1">
    <location>
        <position position="162"/>
    </location>
</feature>
<feature type="site" description="Positions MEP for the nucleophilic attack" evidence="1">
    <location>
        <position position="218"/>
    </location>
</feature>
<gene>
    <name evidence="1" type="primary">ispD</name>
    <name type="ordered locus">PXO_00169</name>
</gene>
<dbReference type="EC" id="2.7.7.60" evidence="1"/>
<dbReference type="EMBL" id="CP000967">
    <property type="protein sequence ID" value="ACD58298.1"/>
    <property type="molecule type" value="Genomic_DNA"/>
</dbReference>
<dbReference type="RefSeq" id="WP_011259527.1">
    <property type="nucleotide sequence ID" value="NC_010717.2"/>
</dbReference>
<dbReference type="SMR" id="B2SUA8"/>
<dbReference type="KEGG" id="xop:PXO_00169"/>
<dbReference type="eggNOG" id="COG1211">
    <property type="taxonomic scope" value="Bacteria"/>
</dbReference>
<dbReference type="HOGENOM" id="CLU_061281_3_1_6"/>
<dbReference type="UniPathway" id="UPA00056">
    <property type="reaction ID" value="UER00093"/>
</dbReference>
<dbReference type="Proteomes" id="UP000001740">
    <property type="component" value="Chromosome"/>
</dbReference>
<dbReference type="GO" id="GO:0050518">
    <property type="term" value="F:2-C-methyl-D-erythritol 4-phosphate cytidylyltransferase activity"/>
    <property type="evidence" value="ECO:0007669"/>
    <property type="project" value="UniProtKB-UniRule"/>
</dbReference>
<dbReference type="GO" id="GO:0019288">
    <property type="term" value="P:isopentenyl diphosphate biosynthetic process, methylerythritol 4-phosphate pathway"/>
    <property type="evidence" value="ECO:0007669"/>
    <property type="project" value="UniProtKB-UniRule"/>
</dbReference>
<dbReference type="CDD" id="cd02516">
    <property type="entry name" value="CDP-ME_synthetase"/>
    <property type="match status" value="1"/>
</dbReference>
<dbReference type="FunFam" id="3.90.550.10:FF:000003">
    <property type="entry name" value="2-C-methyl-D-erythritol 4-phosphate cytidylyltransferase"/>
    <property type="match status" value="1"/>
</dbReference>
<dbReference type="Gene3D" id="3.90.550.10">
    <property type="entry name" value="Spore Coat Polysaccharide Biosynthesis Protein SpsA, Chain A"/>
    <property type="match status" value="1"/>
</dbReference>
<dbReference type="HAMAP" id="MF_00108">
    <property type="entry name" value="IspD"/>
    <property type="match status" value="1"/>
</dbReference>
<dbReference type="InterPro" id="IPR001228">
    <property type="entry name" value="IspD"/>
</dbReference>
<dbReference type="InterPro" id="IPR034683">
    <property type="entry name" value="IspD/TarI"/>
</dbReference>
<dbReference type="InterPro" id="IPR050088">
    <property type="entry name" value="IspD/TarI_cytidylyltransf_bact"/>
</dbReference>
<dbReference type="InterPro" id="IPR018294">
    <property type="entry name" value="ISPD_synthase_CS"/>
</dbReference>
<dbReference type="InterPro" id="IPR029044">
    <property type="entry name" value="Nucleotide-diphossugar_trans"/>
</dbReference>
<dbReference type="NCBIfam" id="TIGR00453">
    <property type="entry name" value="ispD"/>
    <property type="match status" value="1"/>
</dbReference>
<dbReference type="PANTHER" id="PTHR32125">
    <property type="entry name" value="2-C-METHYL-D-ERYTHRITOL 4-PHOSPHATE CYTIDYLYLTRANSFERASE, CHLOROPLASTIC"/>
    <property type="match status" value="1"/>
</dbReference>
<dbReference type="PANTHER" id="PTHR32125:SF4">
    <property type="entry name" value="2-C-METHYL-D-ERYTHRITOL 4-PHOSPHATE CYTIDYLYLTRANSFERASE, CHLOROPLASTIC"/>
    <property type="match status" value="1"/>
</dbReference>
<dbReference type="Pfam" id="PF01128">
    <property type="entry name" value="IspD"/>
    <property type="match status" value="1"/>
</dbReference>
<dbReference type="SUPFAM" id="SSF53448">
    <property type="entry name" value="Nucleotide-diphospho-sugar transferases"/>
    <property type="match status" value="1"/>
</dbReference>
<dbReference type="PROSITE" id="PS01295">
    <property type="entry name" value="ISPD"/>
    <property type="match status" value="1"/>
</dbReference>
<organism>
    <name type="scientific">Xanthomonas oryzae pv. oryzae (strain PXO99A)</name>
    <dbReference type="NCBI Taxonomy" id="360094"/>
    <lineage>
        <taxon>Bacteria</taxon>
        <taxon>Pseudomonadati</taxon>
        <taxon>Pseudomonadota</taxon>
        <taxon>Gammaproteobacteria</taxon>
        <taxon>Lysobacterales</taxon>
        <taxon>Lysobacteraceae</taxon>
        <taxon>Xanthomonas</taxon>
    </lineage>
</organism>
<reference key="1">
    <citation type="journal article" date="2008" name="BMC Genomics">
        <title>Genome sequence and rapid evolution of the rice pathogen Xanthomonas oryzae pv. oryzae PXO99A.</title>
        <authorList>
            <person name="Salzberg S.L."/>
            <person name="Sommer D.D."/>
            <person name="Schatz M.C."/>
            <person name="Phillippy A.M."/>
            <person name="Rabinowicz P.D."/>
            <person name="Tsuge S."/>
            <person name="Furutani A."/>
            <person name="Ochiai H."/>
            <person name="Delcher A.L."/>
            <person name="Kelley D."/>
            <person name="Madupu R."/>
            <person name="Puiu D."/>
            <person name="Radune D."/>
            <person name="Shumway M."/>
            <person name="Trapnell C."/>
            <person name="Aparna G."/>
            <person name="Jha G."/>
            <person name="Pandey A."/>
            <person name="Patil P.B."/>
            <person name="Ishihara H."/>
            <person name="Meyer D.F."/>
            <person name="Szurek B."/>
            <person name="Verdier V."/>
            <person name="Koebnik R."/>
            <person name="Dow J.M."/>
            <person name="Ryan R.P."/>
            <person name="Hirata H."/>
            <person name="Tsuyumu S."/>
            <person name="Won Lee S."/>
            <person name="Seo Y.-S."/>
            <person name="Sriariyanum M."/>
            <person name="Ronald P.C."/>
            <person name="Sonti R.V."/>
            <person name="Van Sluys M.-A."/>
            <person name="Leach J.E."/>
            <person name="White F.F."/>
            <person name="Bogdanove A.J."/>
        </authorList>
    </citation>
    <scope>NUCLEOTIDE SEQUENCE [LARGE SCALE GENOMIC DNA]</scope>
    <source>
        <strain>PXO99A</strain>
    </source>
</reference>
<comment type="function">
    <text evidence="1">Catalyzes the formation of 4-diphosphocytidyl-2-C-methyl-D-erythritol from CTP and 2-C-methyl-D-erythritol 4-phosphate (MEP).</text>
</comment>
<comment type="catalytic activity">
    <reaction evidence="1">
        <text>2-C-methyl-D-erythritol 4-phosphate + CTP + H(+) = 4-CDP-2-C-methyl-D-erythritol + diphosphate</text>
        <dbReference type="Rhea" id="RHEA:13429"/>
        <dbReference type="ChEBI" id="CHEBI:15378"/>
        <dbReference type="ChEBI" id="CHEBI:33019"/>
        <dbReference type="ChEBI" id="CHEBI:37563"/>
        <dbReference type="ChEBI" id="CHEBI:57823"/>
        <dbReference type="ChEBI" id="CHEBI:58262"/>
        <dbReference type="EC" id="2.7.7.60"/>
    </reaction>
</comment>
<comment type="pathway">
    <text evidence="1">Isoprenoid biosynthesis; isopentenyl diphosphate biosynthesis via DXP pathway; isopentenyl diphosphate from 1-deoxy-D-xylulose 5-phosphate: step 2/6.</text>
</comment>
<comment type="similarity">
    <text evidence="1">Belongs to the IspD/TarI cytidylyltransferase family. IspD subfamily.</text>
</comment>
<protein>
    <recommendedName>
        <fullName evidence="1">2-C-methyl-D-erythritol 4-phosphate cytidylyltransferase</fullName>
        <ecNumber evidence="1">2.7.7.60</ecNumber>
    </recommendedName>
    <alternativeName>
        <fullName evidence="1">4-diphosphocytidyl-2C-methyl-D-erythritol synthase</fullName>
    </alternativeName>
    <alternativeName>
        <fullName evidence="1">MEP cytidylyltransferase</fullName>
        <shortName evidence="1">MCT</shortName>
    </alternativeName>
</protein>
<sequence length="272" mass="28531">MTGSIWAGSIWAIVPAAGRGTRFGGPLPKQYLQAGGQPLMAYTLMALAAHPALAGIVVAIAPDDADWPGWTAVQSKPVLTCLGGATRAASVLAGVLALPESVRADDFVLVHDAARPNLALADLDRLLEIGRGDPVGAILAAPVRDTLKRAGDDGGIDGTEPRERLWRALTPQLFRRHQLIRGLTEASAAGVDVTDEAMAMERMGLRPLLVEGAEDNFKVTTPADLARFEFELARRGIAVDADALEAPAVNAQSNARNVATQLATVSYGNDAT</sequence>
<keyword id="KW-0414">Isoprene biosynthesis</keyword>
<keyword id="KW-0548">Nucleotidyltransferase</keyword>
<keyword id="KW-0808">Transferase</keyword>
<accession>B2SUA8</accession>
<proteinExistence type="inferred from homology"/>